<accession>P62284</accession>
<evidence type="ECO:0000250" key="1"/>
<evidence type="ECO:0000255" key="2">
    <source>
        <dbReference type="PROSITE-ProRule" id="PRU00116"/>
    </source>
</evidence>
<reference key="1">
    <citation type="journal article" date="2004" name="PLoS Biol.">
        <title>Accelerated evolution of the ASPM gene controlling brain size begins prior to human brain expansion.</title>
        <authorList>
            <person name="Kouprina N."/>
            <person name="Pavlicek A."/>
            <person name="Mochida G.H."/>
            <person name="Solomon G."/>
            <person name="Gersch W."/>
            <person name="Yoon Y.-H."/>
            <person name="Collura R."/>
            <person name="Ruvolo M."/>
            <person name="Barrett J.C."/>
            <person name="Woods C.G."/>
            <person name="Walsh C.A."/>
            <person name="Jurka J."/>
            <person name="Larionov V."/>
        </authorList>
    </citation>
    <scope>NUCLEOTIDE SEQUENCE [GENOMIC DNA]</scope>
</reference>
<comment type="function">
    <text evidence="1">Probable role in mitotic spindle regulation and coordination of mitotic processes. May have a preferential role in regulating neurogenesis (By similarity).</text>
</comment>
<comment type="subcellular location">
    <subcellularLocation>
        <location evidence="1">Cytoplasm</location>
    </subcellularLocation>
    <subcellularLocation>
        <location evidence="1">Nucleus</location>
    </subcellularLocation>
    <text evidence="1">The nuclear-cytoplasmic distribution could be regulated by the availability of calmodulin.</text>
</comment>
<feature type="chain" id="PRO_0000191326" description="Abnormal spindle-like microcephaly-associated protein homolog">
    <location>
        <begin position="1" status="less than"/>
        <end position="1564" status="greater than"/>
    </location>
</feature>
<feature type="domain" description="IQ 1" evidence="2">
    <location>
        <begin position="31"/>
        <end position="60"/>
    </location>
</feature>
<feature type="domain" description="IQ 2" evidence="2">
    <location>
        <begin position="220"/>
        <end position="251"/>
    </location>
</feature>
<feature type="domain" description="IQ 3" evidence="2">
    <location>
        <begin position="270"/>
        <end position="299"/>
    </location>
</feature>
<feature type="domain" description="IQ 4" evidence="2">
    <location>
        <begin position="293"/>
        <end position="322"/>
    </location>
</feature>
<feature type="domain" description="IQ 5" evidence="2">
    <location>
        <begin position="366"/>
        <end position="395"/>
    </location>
</feature>
<feature type="domain" description="IQ 6" evidence="2">
    <location>
        <begin position="389"/>
        <end position="420"/>
    </location>
</feature>
<feature type="domain" description="IQ 7" evidence="2">
    <location>
        <begin position="439"/>
        <end position="468"/>
    </location>
</feature>
<feature type="domain" description="IQ 8" evidence="2">
    <location>
        <begin position="462"/>
        <end position="491"/>
    </location>
</feature>
<feature type="domain" description="IQ 9" evidence="2">
    <location>
        <begin position="512"/>
        <end position="541"/>
    </location>
</feature>
<feature type="domain" description="IQ 10" evidence="2">
    <location>
        <begin position="535"/>
        <end position="566"/>
    </location>
</feature>
<feature type="domain" description="IQ 11" evidence="2">
    <location>
        <begin position="608"/>
        <end position="639"/>
    </location>
</feature>
<feature type="domain" description="IQ 12" evidence="2">
    <location>
        <begin position="658"/>
        <end position="687"/>
    </location>
</feature>
<feature type="domain" description="IQ 13" evidence="2">
    <location>
        <begin position="681"/>
        <end position="712"/>
    </location>
</feature>
<feature type="domain" description="IQ 14" evidence="2">
    <location>
        <begin position="731"/>
        <end position="762"/>
    </location>
</feature>
<feature type="domain" description="IQ 15" evidence="2">
    <location>
        <begin position="754"/>
        <end position="785"/>
    </location>
</feature>
<feature type="domain" description="IQ 16" evidence="2">
    <location>
        <begin position="804"/>
        <end position="835"/>
    </location>
</feature>
<feature type="domain" description="IQ 17" evidence="2">
    <location>
        <begin position="827"/>
        <end position="856"/>
    </location>
</feature>
<feature type="domain" description="IQ 18" evidence="2">
    <location>
        <begin position="877"/>
        <end position="908"/>
    </location>
</feature>
<feature type="domain" description="IQ 19" evidence="2">
    <location>
        <begin position="900"/>
        <end position="931"/>
    </location>
</feature>
<feature type="domain" description="IQ 20" evidence="2">
    <location>
        <begin position="949"/>
        <end position="980"/>
    </location>
</feature>
<feature type="domain" description="IQ 21" evidence="2">
    <location>
        <begin position="972"/>
        <end position="1003"/>
    </location>
</feature>
<feature type="domain" description="IQ 22" evidence="2">
    <location>
        <begin position="1022"/>
        <end position="1053"/>
    </location>
</feature>
<feature type="domain" description="IQ 23" evidence="2">
    <location>
        <begin position="1045"/>
        <end position="1076"/>
    </location>
</feature>
<feature type="domain" description="IQ 24" evidence="2">
    <location>
        <begin position="1095"/>
        <end position="1126"/>
    </location>
</feature>
<feature type="domain" description="IQ 25" evidence="2">
    <location>
        <begin position="1168"/>
        <end position="1199"/>
    </location>
</feature>
<feature type="domain" description="IQ 26" evidence="2">
    <location>
        <begin position="1304"/>
        <end position="1333"/>
    </location>
</feature>
<feature type="domain" description="IQ 27" evidence="2">
    <location>
        <begin position="1327"/>
        <end position="1358"/>
    </location>
</feature>
<feature type="domain" description="IQ 28" evidence="2">
    <location>
        <begin position="1377"/>
        <end position="1406"/>
    </location>
</feature>
<feature type="domain" description="IQ 29" evidence="2">
    <location>
        <begin position="1452"/>
        <end position="1483"/>
    </location>
</feature>
<feature type="domain" description="IQ 30" evidence="2">
    <location>
        <begin position="1474"/>
        <end position="1503"/>
    </location>
</feature>
<feature type="domain" description="IQ 31" evidence="2">
    <location>
        <begin position="1500"/>
        <end position="1531"/>
    </location>
</feature>
<feature type="non-terminal residue">
    <location>
        <position position="1"/>
    </location>
</feature>
<feature type="non-terminal residue">
    <location>
        <position position="1564"/>
    </location>
</feature>
<proteinExistence type="inferred from homology"/>
<sequence length="1564" mass="189406">TRKRFLKLKYYSIILQSRIRMIIAVTSYKRYLWATVTIQRHWRAYLRRKQDQQRYEMLKSSSLIIQAMFRRWKQRKMQLQVKATITLQRAFREWHLRKRAKEEKSAIVIQSWYRMHKQLRKYVYVRSCVVIIQKRFRCFQAQRLYKRKRESILTIQKYYRAYLKGKIERIHYLQKRAAAIQLQAAFKILKAHNLHRPIRAACVIQSYWRMRQDRVRFLNLKKNIIKLQAHVRKHQQLQKYKKIKKAAVIIQTHFQAYIFARKVLASYQKTRSAVIVLQSAYRGMQARKMYIHILTSVIKIQSYYRAYVSKKEFLSLKNATIKLQSIVKMKQTRKQYVHLRATALFIQQCYHSKKLAAQKREEYMQMRESCIKLQAFVRGYLVRKQIRLQRKAVISLQSYFRMRKARQYYLKMYKAVIIIQNYYHSYKAQVNQRKNFLRVKKAATCLQAAYRGYKVRQLIKQQSVAAVKIQSAFRGYSKRVKYLSVLQSIIKIQRWYRAYKTLYDIRTRFLKAKAAVISLQSAYRGWKVRKQIRREHQAAMKIQSAFRMAKAQKQFRLFKTAALVIQQHLRAWIAGRKQRMEYIELRHSVLMLQSMWKGKTLRRDLQRQHTCAVIIQSYYRMHVQQKKWKIMKEAALLIQKYYRACRIGREQHCLYLETKAAVLTLQSAYRGMKVRKRIKACNTAAITIQSKYRAYKTKKKYAAYRASAIIIQRWYRGIKITNHQYKEYLNLKKTAIKIQAVYRGIRVRRHIQHMHRAATFIKAMFKMHQPRIRYHTMRKATIVIQVRYRAYHQGKMQRENYLKILKAVNILQANFRGVRVRRTLRKLRIAATLIQSNYRRYRQQTYFNKLKKITRTVQQRYRAVKERNIQFQRYNKLRHSVIYIQALFRGMKARRHLKTMHIAATLIQRRFRALMLRRRFLSLKKTAIWIQRKYRAHLRTKRHLQFLRLQNAAIKIQSSYRRWMIRKKMREMHRAAAFIQATFRMHRVHMRYHALKQASVVIQQRYQANRAAKLQRQHYLRQRYSAVILQAAFRGMKTRRHLKSMYFSAILIQSRFRSLLVRRRFISLKKAAIFIQRKYRATICAKHKLRQFLQLRKAAITIQSSYRRLMVKKKLQEMHRAAVLIQATFRMHRTHITFQTWKHASILIQQHYRTYRASKLQRENYTKQWHSAVIIQAAYRGMKARQLLREKHKAAIIIQSTYRMYRQYCLYQKLQWATKIIQEKYRADKKKHKALQHTELRKAETCVQASFQDVNIEKLIQEQHQTSIIIQKHCKAFKIKKHYLHLRAPVVSIQRRYGKLTAVHTQAVICIQSYYRGFKVRRDIQNMHLAATRIQSFYRMHRAKVHYQTKKTAIVIIQNYYRLYVRVKTERKSFLAVQKSVRTIQAAFRGMKVRQKLKNIPKEKMAAIVDQSALYCYRSKGQDEAVRSEGVIIQEWCKASCLACSQEEYHSQSRAAVTIQKAFRRMITRKLETQKCATLRIQSFLRMAVYRRRRANSVQQKRAAVTLQHYFRMWQTRKQFLLYRKAAVVLQNHYRAFLSGKHQRQVYLQIRSSVIIIQARIKGF</sequence>
<dbReference type="EMBL" id="AY497018">
    <property type="protein sequence ID" value="AAS48533.1"/>
    <property type="molecule type" value="Genomic_DNA"/>
</dbReference>
<dbReference type="SMR" id="P62284"/>
<dbReference type="OrthoDB" id="2148418at2759"/>
<dbReference type="GO" id="GO:0005737">
    <property type="term" value="C:cytoplasm"/>
    <property type="evidence" value="ECO:0007669"/>
    <property type="project" value="UniProtKB-SubCell"/>
</dbReference>
<dbReference type="GO" id="GO:0005634">
    <property type="term" value="C:nucleus"/>
    <property type="evidence" value="ECO:0007669"/>
    <property type="project" value="UniProtKB-SubCell"/>
</dbReference>
<dbReference type="GO" id="GO:0005516">
    <property type="term" value="F:calmodulin binding"/>
    <property type="evidence" value="ECO:0007669"/>
    <property type="project" value="UniProtKB-KW"/>
</dbReference>
<dbReference type="GO" id="GO:0051301">
    <property type="term" value="P:cell division"/>
    <property type="evidence" value="ECO:0007669"/>
    <property type="project" value="UniProtKB-KW"/>
</dbReference>
<dbReference type="FunFam" id="1.20.5.190:FF:000052">
    <property type="entry name" value="Abnormal spindle-like microcephaly-associated protein"/>
    <property type="match status" value="1"/>
</dbReference>
<dbReference type="FunFam" id="1.20.5.190:FF:000008">
    <property type="entry name" value="Abnormal spindle-like microcephaly-associated protein homolog"/>
    <property type="match status" value="6"/>
</dbReference>
<dbReference type="FunFam" id="1.20.5.190:FF:000009">
    <property type="entry name" value="Abnormal spindle-like microcephaly-associated protein homolog"/>
    <property type="match status" value="4"/>
</dbReference>
<dbReference type="FunFam" id="1.20.5.190:FF:000010">
    <property type="entry name" value="Abnormal spindle-like microcephaly-associated protein homolog"/>
    <property type="match status" value="2"/>
</dbReference>
<dbReference type="FunFam" id="1.20.5.190:FF:000023">
    <property type="entry name" value="Abnormal spindle-like microcephaly-associated protein homolog"/>
    <property type="match status" value="1"/>
</dbReference>
<dbReference type="FunFam" id="1.20.5.190:FF:000028">
    <property type="entry name" value="Abnormal spindle-like microcephaly-associated protein homolog"/>
    <property type="match status" value="1"/>
</dbReference>
<dbReference type="FunFam" id="1.20.5.190:FF:000029">
    <property type="entry name" value="Abnormal spindle-like microcephaly-associated protein homolog"/>
    <property type="match status" value="1"/>
</dbReference>
<dbReference type="FunFam" id="1.20.5.190:FF:000030">
    <property type="entry name" value="Abnormal spindle-like microcephaly-associated protein homolog"/>
    <property type="match status" value="1"/>
</dbReference>
<dbReference type="FunFam" id="1.20.5.190:FF:000032">
    <property type="entry name" value="Abnormal spindle-like microcephaly-associated protein homolog"/>
    <property type="match status" value="1"/>
</dbReference>
<dbReference type="FunFam" id="1.20.5.190:FF:000053">
    <property type="entry name" value="Abnormal spindle-like microcephaly-associated protein homolog"/>
    <property type="match status" value="1"/>
</dbReference>
<dbReference type="FunFam" id="1.20.5.190:FF:000059">
    <property type="entry name" value="Abnormal spindle-like microcephaly-associated protein homolog"/>
    <property type="match status" value="1"/>
</dbReference>
<dbReference type="Gene3D" id="1.20.5.190">
    <property type="match status" value="27"/>
</dbReference>
<dbReference type="InterPro" id="IPR052318">
    <property type="entry name" value="CellDiv_DevSignal_Domain"/>
</dbReference>
<dbReference type="InterPro" id="IPR000048">
    <property type="entry name" value="IQ_motif_EF-hand-BS"/>
</dbReference>
<dbReference type="InterPro" id="IPR027417">
    <property type="entry name" value="P-loop_NTPase"/>
</dbReference>
<dbReference type="PANTHER" id="PTHR22590:SF4">
    <property type="entry name" value="ABNORMAL SPINDLE-LIKE MICROCEPHALY-ASSOCIATED PROTEIN"/>
    <property type="match status" value="1"/>
</dbReference>
<dbReference type="PANTHER" id="PTHR22590">
    <property type="entry name" value="MYOSIN MOTOR DOMAIN-CONTAINING PROTEIN"/>
    <property type="match status" value="1"/>
</dbReference>
<dbReference type="Pfam" id="PF00612">
    <property type="entry name" value="IQ"/>
    <property type="match status" value="34"/>
</dbReference>
<dbReference type="SMART" id="SM00015">
    <property type="entry name" value="IQ"/>
    <property type="match status" value="49"/>
</dbReference>
<dbReference type="SUPFAM" id="SSF52540">
    <property type="entry name" value="P-loop containing nucleoside triphosphate hydrolases"/>
    <property type="match status" value="15"/>
</dbReference>
<dbReference type="PROSITE" id="PS50096">
    <property type="entry name" value="IQ"/>
    <property type="match status" value="31"/>
</dbReference>
<protein>
    <recommendedName>
        <fullName>Abnormal spindle-like microcephaly-associated protein homolog</fullName>
    </recommendedName>
</protein>
<organism>
    <name type="scientific">Ateles geoffroyi</name>
    <name type="common">Black-handed spider monkey</name>
    <name type="synonym">Geoffroy's spider monkey</name>
    <dbReference type="NCBI Taxonomy" id="9509"/>
    <lineage>
        <taxon>Eukaryota</taxon>
        <taxon>Metazoa</taxon>
        <taxon>Chordata</taxon>
        <taxon>Craniata</taxon>
        <taxon>Vertebrata</taxon>
        <taxon>Euteleostomi</taxon>
        <taxon>Mammalia</taxon>
        <taxon>Eutheria</taxon>
        <taxon>Euarchontoglires</taxon>
        <taxon>Primates</taxon>
        <taxon>Haplorrhini</taxon>
        <taxon>Platyrrhini</taxon>
        <taxon>Atelidae</taxon>
        <taxon>Atelinae</taxon>
        <taxon>Ateles</taxon>
    </lineage>
</organism>
<gene>
    <name type="primary">ASPM</name>
</gene>
<keyword id="KW-0112">Calmodulin-binding</keyword>
<keyword id="KW-0131">Cell cycle</keyword>
<keyword id="KW-0132">Cell division</keyword>
<keyword id="KW-0963">Cytoplasm</keyword>
<keyword id="KW-0498">Mitosis</keyword>
<keyword id="KW-0539">Nucleus</keyword>
<keyword id="KW-0677">Repeat</keyword>
<name>ASPM_ATEGE</name>